<comment type="function">
    <text evidence="1">Catalyzes the conversion of uracil and 5-phospho-alpha-D-ribose 1-diphosphate (PRPP) to UMP and diphosphate.</text>
</comment>
<comment type="catalytic activity">
    <reaction evidence="1">
        <text>UMP + diphosphate = 5-phospho-alpha-D-ribose 1-diphosphate + uracil</text>
        <dbReference type="Rhea" id="RHEA:13017"/>
        <dbReference type="ChEBI" id="CHEBI:17568"/>
        <dbReference type="ChEBI" id="CHEBI:33019"/>
        <dbReference type="ChEBI" id="CHEBI:57865"/>
        <dbReference type="ChEBI" id="CHEBI:58017"/>
        <dbReference type="EC" id="2.4.2.9"/>
    </reaction>
</comment>
<comment type="cofactor">
    <cofactor evidence="1">
        <name>Mg(2+)</name>
        <dbReference type="ChEBI" id="CHEBI:18420"/>
    </cofactor>
    <text evidence="1">Binds 1 Mg(2+) ion per subunit. The magnesium is bound as Mg-PRPP.</text>
</comment>
<comment type="activity regulation">
    <text evidence="1">Allosterically activated by GTP.</text>
</comment>
<comment type="pathway">
    <text evidence="1">Pyrimidine metabolism; UMP biosynthesis via salvage pathway; UMP from uracil: step 1/1.</text>
</comment>
<comment type="similarity">
    <text evidence="1">Belongs to the UPRTase family.</text>
</comment>
<gene>
    <name evidence="1" type="primary">upp</name>
    <name type="ordered locus">RBAM_034050</name>
</gene>
<keyword id="KW-0021">Allosteric enzyme</keyword>
<keyword id="KW-0328">Glycosyltransferase</keyword>
<keyword id="KW-0342">GTP-binding</keyword>
<keyword id="KW-0460">Magnesium</keyword>
<keyword id="KW-0547">Nucleotide-binding</keyword>
<keyword id="KW-0808">Transferase</keyword>
<sequence length="209" mass="23060">MGKVYVFDHPLIQHKLTYIRNENTGTKDFRDLVDEVASLMAFEITRDLPLKEVEVKTPVQTATSKVISGKKLGIVPILRAGLGMVDGMLKLIPAAKVGHVGLYRDPETLKPVEYYVKLPSDVEEREFIVVDPMLATGGSAVEAINSLKKRGARNIRFMCLVAAPEGVEELQKHHSDVDIYIAALDEKLNEKGYIVPGLGDAGDRLYGTK</sequence>
<proteinExistence type="inferred from homology"/>
<feature type="chain" id="PRO_1000053675" description="Uracil phosphoribosyltransferase">
    <location>
        <begin position="1"/>
        <end position="209"/>
    </location>
</feature>
<feature type="binding site" evidence="1">
    <location>
        <position position="79"/>
    </location>
    <ligand>
        <name>5-phospho-alpha-D-ribose 1-diphosphate</name>
        <dbReference type="ChEBI" id="CHEBI:58017"/>
    </ligand>
</feature>
<feature type="binding site" evidence="1">
    <location>
        <position position="104"/>
    </location>
    <ligand>
        <name>5-phospho-alpha-D-ribose 1-diphosphate</name>
        <dbReference type="ChEBI" id="CHEBI:58017"/>
    </ligand>
</feature>
<feature type="binding site" evidence="1">
    <location>
        <begin position="131"/>
        <end position="139"/>
    </location>
    <ligand>
        <name>5-phospho-alpha-D-ribose 1-diphosphate</name>
        <dbReference type="ChEBI" id="CHEBI:58017"/>
    </ligand>
</feature>
<feature type="binding site" evidence="1">
    <location>
        <position position="194"/>
    </location>
    <ligand>
        <name>uracil</name>
        <dbReference type="ChEBI" id="CHEBI:17568"/>
    </ligand>
</feature>
<feature type="binding site" evidence="1">
    <location>
        <begin position="199"/>
        <end position="201"/>
    </location>
    <ligand>
        <name>uracil</name>
        <dbReference type="ChEBI" id="CHEBI:17568"/>
    </ligand>
</feature>
<feature type="binding site" evidence="1">
    <location>
        <position position="200"/>
    </location>
    <ligand>
        <name>5-phospho-alpha-D-ribose 1-diphosphate</name>
        <dbReference type="ChEBI" id="CHEBI:58017"/>
    </ligand>
</feature>
<accession>A7Z9Q8</accession>
<organism>
    <name type="scientific">Bacillus velezensis (strain DSM 23117 / BGSC 10A6 / LMG 26770 / FZB42)</name>
    <name type="common">Bacillus amyloliquefaciens subsp. plantarum</name>
    <dbReference type="NCBI Taxonomy" id="326423"/>
    <lineage>
        <taxon>Bacteria</taxon>
        <taxon>Bacillati</taxon>
        <taxon>Bacillota</taxon>
        <taxon>Bacilli</taxon>
        <taxon>Bacillales</taxon>
        <taxon>Bacillaceae</taxon>
        <taxon>Bacillus</taxon>
        <taxon>Bacillus amyloliquefaciens group</taxon>
    </lineage>
</organism>
<evidence type="ECO:0000255" key="1">
    <source>
        <dbReference type="HAMAP-Rule" id="MF_01218"/>
    </source>
</evidence>
<reference key="1">
    <citation type="journal article" date="2007" name="Nat. Biotechnol.">
        <title>Comparative analysis of the complete genome sequence of the plant growth-promoting bacterium Bacillus amyloliquefaciens FZB42.</title>
        <authorList>
            <person name="Chen X.H."/>
            <person name="Koumoutsi A."/>
            <person name="Scholz R."/>
            <person name="Eisenreich A."/>
            <person name="Schneider K."/>
            <person name="Heinemeyer I."/>
            <person name="Morgenstern B."/>
            <person name="Voss B."/>
            <person name="Hess W.R."/>
            <person name="Reva O."/>
            <person name="Junge H."/>
            <person name="Voigt B."/>
            <person name="Jungblut P.R."/>
            <person name="Vater J."/>
            <person name="Suessmuth R."/>
            <person name="Liesegang H."/>
            <person name="Strittmatter A."/>
            <person name="Gottschalk G."/>
            <person name="Borriss R."/>
        </authorList>
    </citation>
    <scope>NUCLEOTIDE SEQUENCE [LARGE SCALE GENOMIC DNA]</scope>
    <source>
        <strain>DSM 23117 / BGSC 10A6 / LMG 26770 / FZB42</strain>
    </source>
</reference>
<protein>
    <recommendedName>
        <fullName evidence="1">Uracil phosphoribosyltransferase</fullName>
        <ecNumber evidence="1">2.4.2.9</ecNumber>
    </recommendedName>
    <alternativeName>
        <fullName evidence="1">UMP pyrophosphorylase</fullName>
    </alternativeName>
    <alternativeName>
        <fullName evidence="1">UPRTase</fullName>
    </alternativeName>
</protein>
<dbReference type="EC" id="2.4.2.9" evidence="1"/>
<dbReference type="EMBL" id="CP000560">
    <property type="protein sequence ID" value="ABS75734.1"/>
    <property type="molecule type" value="Genomic_DNA"/>
</dbReference>
<dbReference type="RefSeq" id="WP_003151154.1">
    <property type="nucleotide sequence ID" value="NC_009725.2"/>
</dbReference>
<dbReference type="SMR" id="A7Z9Q8"/>
<dbReference type="GeneID" id="93082549"/>
<dbReference type="KEGG" id="bay:RBAM_034050"/>
<dbReference type="HOGENOM" id="CLU_067096_2_2_9"/>
<dbReference type="UniPathway" id="UPA00574">
    <property type="reaction ID" value="UER00636"/>
</dbReference>
<dbReference type="Proteomes" id="UP000001120">
    <property type="component" value="Chromosome"/>
</dbReference>
<dbReference type="GO" id="GO:0005525">
    <property type="term" value="F:GTP binding"/>
    <property type="evidence" value="ECO:0007669"/>
    <property type="project" value="UniProtKB-KW"/>
</dbReference>
<dbReference type="GO" id="GO:0000287">
    <property type="term" value="F:magnesium ion binding"/>
    <property type="evidence" value="ECO:0007669"/>
    <property type="project" value="UniProtKB-UniRule"/>
</dbReference>
<dbReference type="GO" id="GO:0004845">
    <property type="term" value="F:uracil phosphoribosyltransferase activity"/>
    <property type="evidence" value="ECO:0007669"/>
    <property type="project" value="UniProtKB-UniRule"/>
</dbReference>
<dbReference type="GO" id="GO:0044206">
    <property type="term" value="P:UMP salvage"/>
    <property type="evidence" value="ECO:0007669"/>
    <property type="project" value="UniProtKB-UniRule"/>
</dbReference>
<dbReference type="GO" id="GO:0006223">
    <property type="term" value="P:uracil salvage"/>
    <property type="evidence" value="ECO:0007669"/>
    <property type="project" value="InterPro"/>
</dbReference>
<dbReference type="CDD" id="cd06223">
    <property type="entry name" value="PRTases_typeI"/>
    <property type="match status" value="1"/>
</dbReference>
<dbReference type="FunFam" id="3.40.50.2020:FF:000003">
    <property type="entry name" value="Uracil phosphoribosyltransferase"/>
    <property type="match status" value="1"/>
</dbReference>
<dbReference type="Gene3D" id="3.40.50.2020">
    <property type="match status" value="1"/>
</dbReference>
<dbReference type="HAMAP" id="MF_01218_B">
    <property type="entry name" value="Upp_B"/>
    <property type="match status" value="1"/>
</dbReference>
<dbReference type="InterPro" id="IPR000836">
    <property type="entry name" value="PRibTrfase_dom"/>
</dbReference>
<dbReference type="InterPro" id="IPR029057">
    <property type="entry name" value="PRTase-like"/>
</dbReference>
<dbReference type="InterPro" id="IPR034332">
    <property type="entry name" value="Upp_B"/>
</dbReference>
<dbReference type="InterPro" id="IPR050054">
    <property type="entry name" value="UPRTase/APRTase"/>
</dbReference>
<dbReference type="InterPro" id="IPR005765">
    <property type="entry name" value="Ura_phspho_trans"/>
</dbReference>
<dbReference type="NCBIfam" id="NF001097">
    <property type="entry name" value="PRK00129.1"/>
    <property type="match status" value="1"/>
</dbReference>
<dbReference type="NCBIfam" id="TIGR01091">
    <property type="entry name" value="upp"/>
    <property type="match status" value="1"/>
</dbReference>
<dbReference type="PANTHER" id="PTHR32315">
    <property type="entry name" value="ADENINE PHOSPHORIBOSYLTRANSFERASE"/>
    <property type="match status" value="1"/>
</dbReference>
<dbReference type="PANTHER" id="PTHR32315:SF4">
    <property type="entry name" value="URACIL PHOSPHORIBOSYLTRANSFERASE, CHLOROPLASTIC"/>
    <property type="match status" value="1"/>
</dbReference>
<dbReference type="Pfam" id="PF14681">
    <property type="entry name" value="UPRTase"/>
    <property type="match status" value="1"/>
</dbReference>
<dbReference type="SUPFAM" id="SSF53271">
    <property type="entry name" value="PRTase-like"/>
    <property type="match status" value="1"/>
</dbReference>
<name>UPP_BACVZ</name>